<name>TRPD_MYCPA</name>
<keyword id="KW-0028">Amino-acid biosynthesis</keyword>
<keyword id="KW-0057">Aromatic amino acid biosynthesis</keyword>
<keyword id="KW-0328">Glycosyltransferase</keyword>
<keyword id="KW-0460">Magnesium</keyword>
<keyword id="KW-0479">Metal-binding</keyword>
<keyword id="KW-1185">Reference proteome</keyword>
<keyword id="KW-0808">Transferase</keyword>
<keyword id="KW-0822">Tryptophan biosynthesis</keyword>
<organism>
    <name type="scientific">Mycolicibacterium paratuberculosis (strain ATCC BAA-968 / K-10)</name>
    <name type="common">Mycobacterium paratuberculosis</name>
    <dbReference type="NCBI Taxonomy" id="262316"/>
    <lineage>
        <taxon>Bacteria</taxon>
        <taxon>Bacillati</taxon>
        <taxon>Actinomycetota</taxon>
        <taxon>Actinomycetes</taxon>
        <taxon>Mycobacteriales</taxon>
        <taxon>Mycobacteriaceae</taxon>
        <taxon>Mycobacterium</taxon>
        <taxon>Mycobacterium avium complex (MAC)</taxon>
    </lineage>
</organism>
<reference key="1">
    <citation type="journal article" date="2005" name="Proc. Natl. Acad. Sci. U.S.A.">
        <title>The complete genome sequence of Mycobacterium avium subspecies paratuberculosis.</title>
        <authorList>
            <person name="Li L."/>
            <person name="Bannantine J.P."/>
            <person name="Zhang Q."/>
            <person name="Amonsin A."/>
            <person name="May B.J."/>
            <person name="Alt D."/>
            <person name="Banerji N."/>
            <person name="Kanjilal S."/>
            <person name="Kapur V."/>
        </authorList>
    </citation>
    <scope>NUCLEOTIDE SEQUENCE [LARGE SCALE GENOMIC DNA]</scope>
    <source>
        <strain>ATCC BAA-968 / K-10</strain>
    </source>
</reference>
<dbReference type="EC" id="2.4.2.18" evidence="1"/>
<dbReference type="EMBL" id="AE016958">
    <property type="protein sequence ID" value="AAS04248.1"/>
    <property type="molecule type" value="Genomic_DNA"/>
</dbReference>
<dbReference type="RefSeq" id="WP_010949417.1">
    <property type="nucleotide sequence ID" value="NZ_CP106873.1"/>
</dbReference>
<dbReference type="SMR" id="Q73YM4"/>
<dbReference type="STRING" id="262316.MAP_1931c"/>
<dbReference type="KEGG" id="mpa:MAP_1931c"/>
<dbReference type="eggNOG" id="COG0547">
    <property type="taxonomic scope" value="Bacteria"/>
</dbReference>
<dbReference type="HOGENOM" id="CLU_034315_4_1_11"/>
<dbReference type="UniPathway" id="UPA00035">
    <property type="reaction ID" value="UER00041"/>
</dbReference>
<dbReference type="Proteomes" id="UP000000580">
    <property type="component" value="Chromosome"/>
</dbReference>
<dbReference type="GO" id="GO:0005829">
    <property type="term" value="C:cytosol"/>
    <property type="evidence" value="ECO:0007669"/>
    <property type="project" value="TreeGrafter"/>
</dbReference>
<dbReference type="GO" id="GO:0004048">
    <property type="term" value="F:anthranilate phosphoribosyltransferase activity"/>
    <property type="evidence" value="ECO:0007669"/>
    <property type="project" value="UniProtKB-UniRule"/>
</dbReference>
<dbReference type="GO" id="GO:0000287">
    <property type="term" value="F:magnesium ion binding"/>
    <property type="evidence" value="ECO:0007669"/>
    <property type="project" value="UniProtKB-UniRule"/>
</dbReference>
<dbReference type="GO" id="GO:0000162">
    <property type="term" value="P:L-tryptophan biosynthetic process"/>
    <property type="evidence" value="ECO:0007669"/>
    <property type="project" value="UniProtKB-UniRule"/>
</dbReference>
<dbReference type="FunFam" id="1.20.970.10:FF:000006">
    <property type="entry name" value="Anthranilate phosphoribosyltransferase"/>
    <property type="match status" value="1"/>
</dbReference>
<dbReference type="FunFam" id="3.40.1030.10:FF:000002">
    <property type="entry name" value="Anthranilate phosphoribosyltransferase"/>
    <property type="match status" value="1"/>
</dbReference>
<dbReference type="Gene3D" id="3.40.1030.10">
    <property type="entry name" value="Nucleoside phosphorylase/phosphoribosyltransferase catalytic domain"/>
    <property type="match status" value="1"/>
</dbReference>
<dbReference type="Gene3D" id="1.20.970.10">
    <property type="entry name" value="Transferase, Pyrimidine Nucleoside Phosphorylase, Chain C"/>
    <property type="match status" value="1"/>
</dbReference>
<dbReference type="HAMAP" id="MF_00211">
    <property type="entry name" value="TrpD"/>
    <property type="match status" value="1"/>
</dbReference>
<dbReference type="InterPro" id="IPR005940">
    <property type="entry name" value="Anthranilate_Pribosyl_Tfrase"/>
</dbReference>
<dbReference type="InterPro" id="IPR000312">
    <property type="entry name" value="Glycosyl_Trfase_fam3"/>
</dbReference>
<dbReference type="InterPro" id="IPR017459">
    <property type="entry name" value="Glycosyl_Trfase_fam3_N_dom"/>
</dbReference>
<dbReference type="InterPro" id="IPR036320">
    <property type="entry name" value="Glycosyl_Trfase_fam3_N_dom_sf"/>
</dbReference>
<dbReference type="InterPro" id="IPR035902">
    <property type="entry name" value="Nuc_phospho_transferase"/>
</dbReference>
<dbReference type="NCBIfam" id="TIGR01245">
    <property type="entry name" value="trpD"/>
    <property type="match status" value="1"/>
</dbReference>
<dbReference type="PANTHER" id="PTHR43285">
    <property type="entry name" value="ANTHRANILATE PHOSPHORIBOSYLTRANSFERASE"/>
    <property type="match status" value="1"/>
</dbReference>
<dbReference type="PANTHER" id="PTHR43285:SF2">
    <property type="entry name" value="ANTHRANILATE PHOSPHORIBOSYLTRANSFERASE"/>
    <property type="match status" value="1"/>
</dbReference>
<dbReference type="Pfam" id="PF02885">
    <property type="entry name" value="Glycos_trans_3N"/>
    <property type="match status" value="1"/>
</dbReference>
<dbReference type="Pfam" id="PF00591">
    <property type="entry name" value="Glycos_transf_3"/>
    <property type="match status" value="1"/>
</dbReference>
<dbReference type="SUPFAM" id="SSF52418">
    <property type="entry name" value="Nucleoside phosphorylase/phosphoribosyltransferase catalytic domain"/>
    <property type="match status" value="1"/>
</dbReference>
<dbReference type="SUPFAM" id="SSF47648">
    <property type="entry name" value="Nucleoside phosphorylase/phosphoribosyltransferase N-terminal domain"/>
    <property type="match status" value="1"/>
</dbReference>
<evidence type="ECO:0000255" key="1">
    <source>
        <dbReference type="HAMAP-Rule" id="MF_00211"/>
    </source>
</evidence>
<evidence type="ECO:0000256" key="2">
    <source>
        <dbReference type="SAM" id="MobiDB-lite"/>
    </source>
</evidence>
<gene>
    <name evidence="1" type="primary">trpD</name>
    <name type="ordered locus">MAP_1931c</name>
</gene>
<feature type="chain" id="PRO_0000227169" description="Anthranilate phosphoribosyltransferase">
    <location>
        <begin position="1"/>
        <end position="367"/>
    </location>
</feature>
<feature type="region of interest" description="Disordered" evidence="2">
    <location>
        <begin position="1"/>
        <end position="24"/>
    </location>
</feature>
<feature type="compositionally biased region" description="Low complexity" evidence="2">
    <location>
        <begin position="1"/>
        <end position="21"/>
    </location>
</feature>
<feature type="binding site" evidence="1">
    <location>
        <position position="104"/>
    </location>
    <ligand>
        <name>5-phospho-alpha-D-ribose 1-diphosphate</name>
        <dbReference type="ChEBI" id="CHEBI:58017"/>
    </ligand>
</feature>
<feature type="binding site" evidence="1">
    <location>
        <position position="104"/>
    </location>
    <ligand>
        <name>anthranilate</name>
        <dbReference type="ChEBI" id="CHEBI:16567"/>
        <label>1</label>
    </ligand>
</feature>
<feature type="binding site" evidence="1">
    <location>
        <begin position="107"/>
        <end position="108"/>
    </location>
    <ligand>
        <name>5-phospho-alpha-D-ribose 1-diphosphate</name>
        <dbReference type="ChEBI" id="CHEBI:58017"/>
    </ligand>
</feature>
<feature type="binding site" evidence="1">
    <location>
        <position position="112"/>
    </location>
    <ligand>
        <name>5-phospho-alpha-D-ribose 1-diphosphate</name>
        <dbReference type="ChEBI" id="CHEBI:58017"/>
    </ligand>
</feature>
<feature type="binding site" evidence="1">
    <location>
        <begin position="114"/>
        <end position="117"/>
    </location>
    <ligand>
        <name>5-phospho-alpha-D-ribose 1-diphosphate</name>
        <dbReference type="ChEBI" id="CHEBI:58017"/>
    </ligand>
</feature>
<feature type="binding site" evidence="1">
    <location>
        <position position="116"/>
    </location>
    <ligand>
        <name>Mg(2+)</name>
        <dbReference type="ChEBI" id="CHEBI:18420"/>
        <label>1</label>
    </ligand>
</feature>
<feature type="binding site" evidence="1">
    <location>
        <begin position="132"/>
        <end position="140"/>
    </location>
    <ligand>
        <name>5-phospho-alpha-D-ribose 1-diphosphate</name>
        <dbReference type="ChEBI" id="CHEBI:58017"/>
    </ligand>
</feature>
<feature type="binding site" evidence="1">
    <location>
        <position position="135"/>
    </location>
    <ligand>
        <name>anthranilate</name>
        <dbReference type="ChEBI" id="CHEBI:16567"/>
        <label>1</label>
    </ligand>
</feature>
<feature type="binding site" evidence="1">
    <location>
        <position position="144"/>
    </location>
    <ligand>
        <name>5-phospho-alpha-D-ribose 1-diphosphate</name>
        <dbReference type="ChEBI" id="CHEBI:58017"/>
    </ligand>
</feature>
<feature type="binding site" evidence="1">
    <location>
        <position position="190"/>
    </location>
    <ligand>
        <name>anthranilate</name>
        <dbReference type="ChEBI" id="CHEBI:16567"/>
        <label>2</label>
    </ligand>
</feature>
<feature type="binding site" evidence="1">
    <location>
        <position position="248"/>
    </location>
    <ligand>
        <name>Mg(2+)</name>
        <dbReference type="ChEBI" id="CHEBI:18420"/>
        <label>2</label>
    </ligand>
</feature>
<feature type="binding site" evidence="1">
    <location>
        <position position="249"/>
    </location>
    <ligand>
        <name>Mg(2+)</name>
        <dbReference type="ChEBI" id="CHEBI:18420"/>
        <label>1</label>
    </ligand>
</feature>
<feature type="binding site" evidence="1">
    <location>
        <position position="249"/>
    </location>
    <ligand>
        <name>Mg(2+)</name>
        <dbReference type="ChEBI" id="CHEBI:18420"/>
        <label>2</label>
    </ligand>
</feature>
<proteinExistence type="inferred from homology"/>
<sequence length="367" mass="37729">MALSSESSAASAARRPSGGPATSWRQVLARLTGGDDLARGQAAWAMDQIMTGEASPAQIAAFAVAMQVKVPTSAEVIELAEVMLNHALPFPAGAIRDDTVDIVGTGGDGVNTLNLSTMAAIVAAAAGVPVVKHGNRAASSLSGGADTLEELGVRIDLGPEQVARSVAEVGIGFCFAPLFHPSYRHTSAVRREIGVPTVFNLLGPLTNPARPRAGLIGCAFAELAEVMAGVFAARRSSVLVVHGDDGLDELTTTTTSTIWRVQAGTVDRLTFDPAGFGFPRAELDDLLGGDAQTNAAEVRAVLAGGQGPVRDAVVLNAAGAIVAHAGLSSRAEWLPAWEDGLARASAAIDSGAAEQLLARWVRFGQQL</sequence>
<comment type="function">
    <text evidence="1">Catalyzes the transfer of the phosphoribosyl group of 5-phosphorylribose-1-pyrophosphate (PRPP) to anthranilate to yield N-(5'-phosphoribosyl)-anthranilate (PRA).</text>
</comment>
<comment type="catalytic activity">
    <reaction evidence="1">
        <text>N-(5-phospho-beta-D-ribosyl)anthranilate + diphosphate = 5-phospho-alpha-D-ribose 1-diphosphate + anthranilate</text>
        <dbReference type="Rhea" id="RHEA:11768"/>
        <dbReference type="ChEBI" id="CHEBI:16567"/>
        <dbReference type="ChEBI" id="CHEBI:18277"/>
        <dbReference type="ChEBI" id="CHEBI:33019"/>
        <dbReference type="ChEBI" id="CHEBI:58017"/>
        <dbReference type="EC" id="2.4.2.18"/>
    </reaction>
</comment>
<comment type="cofactor">
    <cofactor evidence="1">
        <name>Mg(2+)</name>
        <dbReference type="ChEBI" id="CHEBI:18420"/>
    </cofactor>
    <text evidence="1">Binds 2 magnesium ions per monomer.</text>
</comment>
<comment type="pathway">
    <text evidence="1">Amino-acid biosynthesis; L-tryptophan biosynthesis; L-tryptophan from chorismate: step 2/5.</text>
</comment>
<comment type="subunit">
    <text evidence="1">Homodimer.</text>
</comment>
<comment type="similarity">
    <text evidence="1">Belongs to the anthranilate phosphoribosyltransferase family.</text>
</comment>
<protein>
    <recommendedName>
        <fullName evidence="1">Anthranilate phosphoribosyltransferase</fullName>
        <ecNumber evidence="1">2.4.2.18</ecNumber>
    </recommendedName>
</protein>
<accession>Q73YM4</accession>